<proteinExistence type="uncertain"/>
<protein>
    <recommendedName>
        <fullName>Putative uncharacterized protein YLR222C-A</fullName>
    </recommendedName>
</protein>
<accession>P0C5P7</accession>
<dbReference type="EMBL" id="U19027">
    <property type="status" value="NOT_ANNOTATED_CDS"/>
    <property type="molecule type" value="Genomic_DNA"/>
</dbReference>
<dbReference type="PaxDb" id="4932-YLR222C-A"/>
<dbReference type="EnsemblFungi" id="YLR222C-A_mRNA">
    <property type="protein sequence ID" value="YLR222C-A"/>
    <property type="gene ID" value="YLR222C-A"/>
</dbReference>
<dbReference type="AGR" id="SGD:S000028568"/>
<dbReference type="SGD" id="S000028568">
    <property type="gene designation" value="YLR222C-A"/>
</dbReference>
<dbReference type="HOGENOM" id="CLU_2655840_0_0_1"/>
<feature type="chain" id="PRO_0000309045" description="Putative uncharacterized protein YLR222C-A">
    <location>
        <begin position="1"/>
        <end position="76"/>
    </location>
</feature>
<name>YL222_YEAST</name>
<reference key="1">
    <citation type="journal article" date="1997" name="Nature">
        <title>The nucleotide sequence of Saccharomyces cerevisiae chromosome XII.</title>
        <authorList>
            <person name="Johnston M."/>
            <person name="Hillier L.W."/>
            <person name="Riles L."/>
            <person name="Albermann K."/>
            <person name="Andre B."/>
            <person name="Ansorge W."/>
            <person name="Benes V."/>
            <person name="Brueckner M."/>
            <person name="Delius H."/>
            <person name="Dubois E."/>
            <person name="Duesterhoeft A."/>
            <person name="Entian K.-D."/>
            <person name="Floeth M."/>
            <person name="Goffeau A."/>
            <person name="Hebling U."/>
            <person name="Heumann K."/>
            <person name="Heuss-Neitzel D."/>
            <person name="Hilbert H."/>
            <person name="Hilger F."/>
            <person name="Kleine K."/>
            <person name="Koetter P."/>
            <person name="Louis E.J."/>
            <person name="Messenguy F."/>
            <person name="Mewes H.-W."/>
            <person name="Miosga T."/>
            <person name="Moestl D."/>
            <person name="Mueller-Auer S."/>
            <person name="Nentwich U."/>
            <person name="Obermaier B."/>
            <person name="Piravandi E."/>
            <person name="Pohl T.M."/>
            <person name="Portetelle D."/>
            <person name="Purnelle B."/>
            <person name="Rechmann S."/>
            <person name="Rieger M."/>
            <person name="Rinke M."/>
            <person name="Rose M."/>
            <person name="Scharfe M."/>
            <person name="Scherens B."/>
            <person name="Scholler P."/>
            <person name="Schwager C."/>
            <person name="Schwarz S."/>
            <person name="Underwood A.P."/>
            <person name="Urrestarazu L.A."/>
            <person name="Vandenbol M."/>
            <person name="Verhasselt P."/>
            <person name="Vierendeels F."/>
            <person name="Voet M."/>
            <person name="Volckaert G."/>
            <person name="Voss H."/>
            <person name="Wambutt R."/>
            <person name="Wedler E."/>
            <person name="Wedler H."/>
            <person name="Zimmermann F.K."/>
            <person name="Zollner A."/>
            <person name="Hani J."/>
            <person name="Hoheisel J.D."/>
        </authorList>
    </citation>
    <scope>NUCLEOTIDE SEQUENCE [LARGE SCALE GENOMIC DNA]</scope>
    <source>
        <strain>ATCC 204508 / S288c</strain>
    </source>
</reference>
<reference key="2">
    <citation type="journal article" date="2014" name="G3 (Bethesda)">
        <title>The reference genome sequence of Saccharomyces cerevisiae: Then and now.</title>
        <authorList>
            <person name="Engel S.R."/>
            <person name="Dietrich F.S."/>
            <person name="Fisk D.G."/>
            <person name="Binkley G."/>
            <person name="Balakrishnan R."/>
            <person name="Costanzo M.C."/>
            <person name="Dwight S.S."/>
            <person name="Hitz B.C."/>
            <person name="Karra K."/>
            <person name="Nash R.S."/>
            <person name="Weng S."/>
            <person name="Wong E.D."/>
            <person name="Lloyd P."/>
            <person name="Skrzypek M.S."/>
            <person name="Miyasato S.R."/>
            <person name="Simison M."/>
            <person name="Cherry J.M."/>
        </authorList>
    </citation>
    <scope>GENOME REANNOTATION</scope>
    <source>
        <strain>ATCC 204508 / S288c</strain>
    </source>
</reference>
<reference key="3">
    <citation type="journal article" date="2003" name="Genome Res.">
        <title>Systematic discovery of new genes in the Saccharomyces cerevisiae genome.</title>
        <authorList>
            <person name="Kessler M.M."/>
            <person name="Zeng Q."/>
            <person name="Hogan S."/>
            <person name="Cook R."/>
            <person name="Morales A.J."/>
            <person name="Cottarel G."/>
        </authorList>
    </citation>
    <scope>GENOME REANNOTATION</scope>
</reference>
<comment type="miscellaneous">
    <text evidence="1">Partially overlaps IFH1.</text>
</comment>
<comment type="caution">
    <text evidence="2">Product of a dubious gene prediction unlikely to encode a functional protein. Because of that it is not part of the S.cerevisiae S288c complete/reference proteome set.</text>
</comment>
<gene>
    <name type="ordered locus">YLR222C-A</name>
    <name type="ORF">smORF499</name>
</gene>
<evidence type="ECO:0000305" key="1"/>
<evidence type="ECO:0000305" key="2">
    <source>
    </source>
</evidence>
<organism>
    <name type="scientific">Saccharomyces cerevisiae (strain ATCC 204508 / S288c)</name>
    <name type="common">Baker's yeast</name>
    <dbReference type="NCBI Taxonomy" id="559292"/>
    <lineage>
        <taxon>Eukaryota</taxon>
        <taxon>Fungi</taxon>
        <taxon>Dikarya</taxon>
        <taxon>Ascomycota</taxon>
        <taxon>Saccharomycotina</taxon>
        <taxon>Saccharomycetes</taxon>
        <taxon>Saccharomycetales</taxon>
        <taxon>Saccharomycetaceae</taxon>
        <taxon>Saccharomyces</taxon>
    </lineage>
</organism>
<sequence length="76" mass="9718">MSYFAFFYGYYNQITFRLQYHHQYVTLPYSTLNFALSLVEKNYMLFFYLYMHIFIEKHNQYFFYWYNPSNQTYKSK</sequence>